<proteinExistence type="evidence at protein level"/>
<reference key="1">
    <citation type="journal article" date="2000" name="J. Biol. Chem.">
        <title>Regulation of mitochondrial single-stranded DNA-binding protein gene expression links nuclear and mitochondrial DNA replication in Drosophila.</title>
        <authorList>
            <person name="Ruiz de Mena I."/>
            <person name="Lefai E."/>
            <person name="Garesse R."/>
            <person name="Kaguni L.S."/>
        </authorList>
    </citation>
    <scope>NUCLEOTIDE SEQUENCE [GENOMIC DNA]</scope>
    <scope>TISSUE SPECIFICITY</scope>
    <scope>DEVELOPMENTAL STAGE</scope>
    <source>
        <strain>Oregon-R</strain>
    </source>
</reference>
<reference key="2">
    <citation type="journal article" date="2000" name="Science">
        <title>The genome sequence of Drosophila melanogaster.</title>
        <authorList>
            <person name="Adams M.D."/>
            <person name="Celniker S.E."/>
            <person name="Holt R.A."/>
            <person name="Evans C.A."/>
            <person name="Gocayne J.D."/>
            <person name="Amanatides P.G."/>
            <person name="Scherer S.E."/>
            <person name="Li P.W."/>
            <person name="Hoskins R.A."/>
            <person name="Galle R.F."/>
            <person name="George R.A."/>
            <person name="Lewis S.E."/>
            <person name="Richards S."/>
            <person name="Ashburner M."/>
            <person name="Henderson S.N."/>
            <person name="Sutton G.G."/>
            <person name="Wortman J.R."/>
            <person name="Yandell M.D."/>
            <person name="Zhang Q."/>
            <person name="Chen L.X."/>
            <person name="Brandon R.C."/>
            <person name="Rogers Y.-H.C."/>
            <person name="Blazej R.G."/>
            <person name="Champe M."/>
            <person name="Pfeiffer B.D."/>
            <person name="Wan K.H."/>
            <person name="Doyle C."/>
            <person name="Baxter E.G."/>
            <person name="Helt G."/>
            <person name="Nelson C.R."/>
            <person name="Miklos G.L.G."/>
            <person name="Abril J.F."/>
            <person name="Agbayani A."/>
            <person name="An H.-J."/>
            <person name="Andrews-Pfannkoch C."/>
            <person name="Baldwin D."/>
            <person name="Ballew R.M."/>
            <person name="Basu A."/>
            <person name="Baxendale J."/>
            <person name="Bayraktaroglu L."/>
            <person name="Beasley E.M."/>
            <person name="Beeson K.Y."/>
            <person name="Benos P.V."/>
            <person name="Berman B.P."/>
            <person name="Bhandari D."/>
            <person name="Bolshakov S."/>
            <person name="Borkova D."/>
            <person name="Botchan M.R."/>
            <person name="Bouck J."/>
            <person name="Brokstein P."/>
            <person name="Brottier P."/>
            <person name="Burtis K.C."/>
            <person name="Busam D.A."/>
            <person name="Butler H."/>
            <person name="Cadieu E."/>
            <person name="Center A."/>
            <person name="Chandra I."/>
            <person name="Cherry J.M."/>
            <person name="Cawley S."/>
            <person name="Dahlke C."/>
            <person name="Davenport L.B."/>
            <person name="Davies P."/>
            <person name="de Pablos B."/>
            <person name="Delcher A."/>
            <person name="Deng Z."/>
            <person name="Mays A.D."/>
            <person name="Dew I."/>
            <person name="Dietz S.M."/>
            <person name="Dodson K."/>
            <person name="Doup L.E."/>
            <person name="Downes M."/>
            <person name="Dugan-Rocha S."/>
            <person name="Dunkov B.C."/>
            <person name="Dunn P."/>
            <person name="Durbin K.J."/>
            <person name="Evangelista C.C."/>
            <person name="Ferraz C."/>
            <person name="Ferriera S."/>
            <person name="Fleischmann W."/>
            <person name="Fosler C."/>
            <person name="Gabrielian A.E."/>
            <person name="Garg N.S."/>
            <person name="Gelbart W.M."/>
            <person name="Glasser K."/>
            <person name="Glodek A."/>
            <person name="Gong F."/>
            <person name="Gorrell J.H."/>
            <person name="Gu Z."/>
            <person name="Guan P."/>
            <person name="Harris M."/>
            <person name="Harris N.L."/>
            <person name="Harvey D.A."/>
            <person name="Heiman T.J."/>
            <person name="Hernandez J.R."/>
            <person name="Houck J."/>
            <person name="Hostin D."/>
            <person name="Houston K.A."/>
            <person name="Howland T.J."/>
            <person name="Wei M.-H."/>
            <person name="Ibegwam C."/>
            <person name="Jalali M."/>
            <person name="Kalush F."/>
            <person name="Karpen G.H."/>
            <person name="Ke Z."/>
            <person name="Kennison J.A."/>
            <person name="Ketchum K.A."/>
            <person name="Kimmel B.E."/>
            <person name="Kodira C.D."/>
            <person name="Kraft C.L."/>
            <person name="Kravitz S."/>
            <person name="Kulp D."/>
            <person name="Lai Z."/>
            <person name="Lasko P."/>
            <person name="Lei Y."/>
            <person name="Levitsky A.A."/>
            <person name="Li J.H."/>
            <person name="Li Z."/>
            <person name="Liang Y."/>
            <person name="Lin X."/>
            <person name="Liu X."/>
            <person name="Mattei B."/>
            <person name="McIntosh T.C."/>
            <person name="McLeod M.P."/>
            <person name="McPherson D."/>
            <person name="Merkulov G."/>
            <person name="Milshina N.V."/>
            <person name="Mobarry C."/>
            <person name="Morris J."/>
            <person name="Moshrefi A."/>
            <person name="Mount S.M."/>
            <person name="Moy M."/>
            <person name="Murphy B."/>
            <person name="Murphy L."/>
            <person name="Muzny D.M."/>
            <person name="Nelson D.L."/>
            <person name="Nelson D.R."/>
            <person name="Nelson K.A."/>
            <person name="Nixon K."/>
            <person name="Nusskern D.R."/>
            <person name="Pacleb J.M."/>
            <person name="Palazzolo M."/>
            <person name="Pittman G.S."/>
            <person name="Pan S."/>
            <person name="Pollard J."/>
            <person name="Puri V."/>
            <person name="Reese M.G."/>
            <person name="Reinert K."/>
            <person name="Remington K."/>
            <person name="Saunders R.D.C."/>
            <person name="Scheeler F."/>
            <person name="Shen H."/>
            <person name="Shue B.C."/>
            <person name="Siden-Kiamos I."/>
            <person name="Simpson M."/>
            <person name="Skupski M.P."/>
            <person name="Smith T.J."/>
            <person name="Spier E."/>
            <person name="Spradling A.C."/>
            <person name="Stapleton M."/>
            <person name="Strong R."/>
            <person name="Sun E."/>
            <person name="Svirskas R."/>
            <person name="Tector C."/>
            <person name="Turner R."/>
            <person name="Venter E."/>
            <person name="Wang A.H."/>
            <person name="Wang X."/>
            <person name="Wang Z.-Y."/>
            <person name="Wassarman D.A."/>
            <person name="Weinstock G.M."/>
            <person name="Weissenbach J."/>
            <person name="Williams S.M."/>
            <person name="Woodage T."/>
            <person name="Worley K.C."/>
            <person name="Wu D."/>
            <person name="Yang S."/>
            <person name="Yao Q.A."/>
            <person name="Ye J."/>
            <person name="Yeh R.-F."/>
            <person name="Zaveri J.S."/>
            <person name="Zhan M."/>
            <person name="Zhang G."/>
            <person name="Zhao Q."/>
            <person name="Zheng L."/>
            <person name="Zheng X.H."/>
            <person name="Zhong F.N."/>
            <person name="Zhong W."/>
            <person name="Zhou X."/>
            <person name="Zhu S.C."/>
            <person name="Zhu X."/>
            <person name="Smith H.O."/>
            <person name="Gibbs R.A."/>
            <person name="Myers E.W."/>
            <person name="Rubin G.M."/>
            <person name="Venter J.C."/>
        </authorList>
    </citation>
    <scope>NUCLEOTIDE SEQUENCE [LARGE SCALE GENOMIC DNA]</scope>
    <source>
        <strain>Berkeley</strain>
    </source>
</reference>
<reference key="3">
    <citation type="journal article" date="2002" name="Genome Biol.">
        <title>Annotation of the Drosophila melanogaster euchromatic genome: a systematic review.</title>
        <authorList>
            <person name="Misra S."/>
            <person name="Crosby M.A."/>
            <person name="Mungall C.J."/>
            <person name="Matthews B.B."/>
            <person name="Campbell K.S."/>
            <person name="Hradecky P."/>
            <person name="Huang Y."/>
            <person name="Kaminker J.S."/>
            <person name="Millburn G.H."/>
            <person name="Prochnik S.E."/>
            <person name="Smith C.D."/>
            <person name="Tupy J.L."/>
            <person name="Whitfield E.J."/>
            <person name="Bayraktaroglu L."/>
            <person name="Berman B.P."/>
            <person name="Bettencourt B.R."/>
            <person name="Celniker S.E."/>
            <person name="de Grey A.D.N.J."/>
            <person name="Drysdale R.A."/>
            <person name="Harris N.L."/>
            <person name="Richter J."/>
            <person name="Russo S."/>
            <person name="Schroeder A.J."/>
            <person name="Shu S.Q."/>
            <person name="Stapleton M."/>
            <person name="Yamada C."/>
            <person name="Ashburner M."/>
            <person name="Gelbart W.M."/>
            <person name="Rubin G.M."/>
            <person name="Lewis S.E."/>
        </authorList>
    </citation>
    <scope>GENOME REANNOTATION</scope>
    <source>
        <strain>Berkeley</strain>
    </source>
</reference>
<reference key="4">
    <citation type="submission" date="2006-06" db="EMBL/GenBank/DDBJ databases">
        <authorList>
            <person name="Stapleton M."/>
            <person name="Carlson J.W."/>
            <person name="Chavez C."/>
            <person name="Frise E."/>
            <person name="George R.A."/>
            <person name="Pacleb J.M."/>
            <person name="Park S."/>
            <person name="Wan K.H."/>
            <person name="Yu C."/>
            <person name="Celniker S.E."/>
        </authorList>
    </citation>
    <scope>NUCLEOTIDE SEQUENCE [LARGE SCALE MRNA]</scope>
    <source>
        <strain>Berkeley</strain>
        <tissue>Embryo</tissue>
    </source>
</reference>
<reference key="5">
    <citation type="journal article" date="1994" name="Gene">
        <title>RNA- and single-stranded DNA-binding (SSB) proteins expressed during Drosophila melanogaster oogenesis: a homolog of bacterial and eukaryotic mitochondrial SSBs.</title>
        <authorList>
            <person name="Stroumbakis N.D."/>
            <person name="Li Z."/>
            <person name="Tolias P.P."/>
        </authorList>
    </citation>
    <scope>NUCLEOTIDE SEQUENCE [MRNA] OF 4-146</scope>
    <scope>FUNCTION</scope>
    <scope>TISSUE SPECIFICITY</scope>
    <scope>DEVELOPMENTAL STAGE</scope>
    <source>
        <strain>Canton-S</strain>
        <tissue>Ovary</tissue>
    </source>
</reference>
<reference key="6">
    <citation type="journal article" date="1995" name="J. Biol. Chem.">
        <title>Mitochondrial single-stranded DNA-binding protein from Drosophila embryos. Physical and biochemical characterization.</title>
        <authorList>
            <person name="Thommes P."/>
            <person name="Farr C.L."/>
            <person name="Marton R.F."/>
            <person name="Kaguni L.S."/>
            <person name="Cotterill S."/>
        </authorList>
    </citation>
    <scope>PROTEIN SEQUENCE OF 23-51</scope>
    <scope>FUNCTION</scope>
    <scope>SUBUNIT</scope>
    <scope>SUBCELLULAR LOCATION</scope>
    <scope>MASS SPECTROMETRY</scope>
</reference>
<reference key="7">
    <citation type="journal article" date="2001" name="Mol. Biol. Cell">
        <title>Mitochondrial single-stranded DNA-binding protein is required for mitochondrial DNA replication and development in Drosophila melanogaster.</title>
        <authorList>
            <person name="Maier D."/>
            <person name="Farr C.L."/>
            <person name="Poeck B."/>
            <person name="Alahari A."/>
            <person name="Vogel M."/>
            <person name="Fischer S."/>
            <person name="Kaguni L.S."/>
            <person name="Schneuwly S."/>
        </authorList>
    </citation>
    <scope>FUNCTION</scope>
    <scope>TISSUE SPECIFICITY</scope>
    <scope>DEVELOPMENTAL STAGE</scope>
</reference>
<reference key="8">
    <citation type="journal article" date="2004" name="J. Biol. Chem.">
        <title>Physiological and biochemical defects in functional interactions of mitochondrial DNA polymerase and DNA-binding mutants of single-stranded DNA-binding protein.</title>
        <authorList>
            <person name="Farr C.L."/>
            <person name="Matsushima Y."/>
            <person name="Lagina A.T. III"/>
            <person name="Luo N."/>
            <person name="Kaguni L.S."/>
        </authorList>
    </citation>
    <scope>FUNCTION</scope>
    <scope>MUTAGENESIS OF TRP-85 AND PHE-91</scope>
</reference>
<reference key="9">
    <citation type="journal article" date="2011" name="J. Biol. Chem.">
        <title>Reduced stimulation of recombinant DNA polymerase gamma and mitochondrial DNA (mtDNA) helicase by variants of mitochondrial single-stranded DNA-binding protein (mtSSB) correlates with defects in mtDNA replication in animal cells.</title>
        <authorList>
            <person name="Oliveira M.T."/>
            <person name="Kaguni L.S."/>
        </authorList>
    </citation>
    <scope>FUNCTION</scope>
    <scope>MUTAGENESIS OF 57-GLN-GLU-58; 74-TYR--ASN-76; 100-LEU-GLU-101; 117-TYR--GLU-119 AND 123-GLN--GLY-125</scope>
</reference>
<reference key="10">
    <citation type="journal article" date="2015" name="J. Biol. Chem.">
        <title>Mitochondrial Single-stranded DNA-binding Proteins Stimulate the Activity of DNA Polymerase gamma by Organization of the Template DNA.</title>
        <authorList>
            <person name="Ciesielski G.L."/>
            <person name="Bermek O."/>
            <person name="Rosado-Ruiz F.A."/>
            <person name="Hovde S.L."/>
            <person name="Neitzke O.J."/>
            <person name="Griffith J.D."/>
            <person name="Kaguni L.S."/>
        </authorList>
    </citation>
    <scope>FUNCTION</scope>
    <scope>MUTAGENESIS OF 74-TYR--ASN-76</scope>
</reference>
<reference key="11">
    <citation type="journal article" date="2017" name="Curr. Biol.">
        <title>The mitochondrial DNA polymerase promotes elimination of paternal mitochondrial genomes.</title>
        <authorList>
            <person name="Yu Z."/>
            <person name="O'Farrell P.H."/>
            <person name="Yakubovich N."/>
            <person name="DeLuca S.Z."/>
        </authorList>
    </citation>
    <scope>FUNCTION</scope>
    <scope>DISRUPTION PHENOTYPE</scope>
</reference>
<accession>P54622</accession>
<accession>Q5U164</accession>
<accession>Q9V3U4</accession>
<sequence>MQHTRRMLNPLLTGLRNLPARGATTTTAAAPAKVEKTVNTVTILGRVGADPQLRGSQEHPVVTFSVATHTNYKYENGDWAQRTDWHRVVVFKPNLRDTVLEYLKKGQRTMVQGKITYGEITDQQGNQKTSTSIIADDVLFFRDANN</sequence>
<name>SSBP_DROME</name>
<keyword id="KW-0903">Direct protein sequencing</keyword>
<keyword id="KW-0235">DNA replication</keyword>
<keyword id="KW-0238">DNA-binding</keyword>
<keyword id="KW-0496">Mitochondrion</keyword>
<keyword id="KW-1185">Reference proteome</keyword>
<keyword id="KW-0809">Transit peptide</keyword>
<organism>
    <name type="scientific">Drosophila melanogaster</name>
    <name type="common">Fruit fly</name>
    <dbReference type="NCBI Taxonomy" id="7227"/>
    <lineage>
        <taxon>Eukaryota</taxon>
        <taxon>Metazoa</taxon>
        <taxon>Ecdysozoa</taxon>
        <taxon>Arthropoda</taxon>
        <taxon>Hexapoda</taxon>
        <taxon>Insecta</taxon>
        <taxon>Pterygota</taxon>
        <taxon>Neoptera</taxon>
        <taxon>Endopterygota</taxon>
        <taxon>Diptera</taxon>
        <taxon>Brachycera</taxon>
        <taxon>Muscomorpha</taxon>
        <taxon>Ephydroidea</taxon>
        <taxon>Drosophilidae</taxon>
        <taxon>Drosophila</taxon>
        <taxon>Sophophora</taxon>
    </lineage>
</organism>
<evidence type="ECO:0000255" key="1">
    <source>
        <dbReference type="PROSITE-ProRule" id="PRU00252"/>
    </source>
</evidence>
<evidence type="ECO:0000269" key="2">
    <source>
    </source>
</evidence>
<evidence type="ECO:0000269" key="3">
    <source>
    </source>
</evidence>
<evidence type="ECO:0000269" key="4">
    <source>
    </source>
</evidence>
<evidence type="ECO:0000269" key="5">
    <source>
    </source>
</evidence>
<evidence type="ECO:0000269" key="6">
    <source>
    </source>
</evidence>
<evidence type="ECO:0000269" key="7">
    <source>
    </source>
</evidence>
<evidence type="ECO:0000269" key="8">
    <source>
    </source>
</evidence>
<evidence type="ECO:0000269" key="9">
    <source>
    </source>
</evidence>
<evidence type="ECO:0000305" key="10"/>
<feature type="transit peptide" description="Mitochondrion" evidence="8">
    <location>
        <begin position="1"/>
        <end position="22"/>
    </location>
</feature>
<feature type="chain" id="PRO_0000033268" description="Single-stranded DNA-binding protein, mitochondrial">
    <location>
        <begin position="23"/>
        <end position="146"/>
    </location>
</feature>
<feature type="domain" description="SSB" evidence="1">
    <location>
        <begin position="38"/>
        <end position="142"/>
    </location>
</feature>
<feature type="mutagenesis site" description="In mtSSBloop12; significant reduction in mitochondrial DNA copy number." evidence="5">
    <original>QE</original>
    <variation>AA</variation>
    <location>
        <begin position="57"/>
        <end position="58"/>
    </location>
</feature>
<feature type="mutagenesis site" description="In mtSSBloop23; significant reduction in mitochondrial DNA copy number. No effect on ability to stimulate the activity of the polymerase PolG1." evidence="5 6">
    <location>
        <begin position="74"/>
        <end position="76"/>
    </location>
</feature>
<feature type="mutagenesis site" description="Reduced DNA synthesis by the polymerase PolG1." evidence="4">
    <original>W</original>
    <variation>A</variation>
    <location>
        <position position="85"/>
    </location>
</feature>
<feature type="mutagenesis site" description="Reduced DNA synthesis by the polymerase PolG1. Severe decrease in the stimulation of DNA synthesis by the polymerase PolG1 and decreased DNA binding; when associated with A-91." evidence="4">
    <original>W</original>
    <variation>T</variation>
    <location>
        <position position="85"/>
    </location>
</feature>
<feature type="mutagenesis site" description="No effect on DNA synthesis by the polymerase PolG1." evidence="4">
    <original>W</original>
    <variation>Y</variation>
    <location>
        <position position="85"/>
    </location>
</feature>
<feature type="mutagenesis site" description="No decrease in DNA synthesis by the polymerase PolG1. Severe decrease DNA synthesis by the polymerase PolG1 and decreased DNA binding; when associated with T-85." evidence="4">
    <original>F</original>
    <variation>A</variation>
    <location>
        <position position="91"/>
    </location>
</feature>
<feature type="mutagenesis site" description="In mtSSBalpha1; significant reduction in mitochondrial DNA (mtDNA) copy number and reduced recovery of mtDNA depletion induced by ethidium bromide." evidence="5">
    <original>LE</original>
    <variation>AA</variation>
    <location>
        <begin position="100"/>
        <end position="101"/>
    </location>
</feature>
<feature type="mutagenesis site" description="In mtSSB45-1; significant reduction in mitochondrial DNA (mtDNA) copy number and reduced recovery of mtDNA depletion induced by ethidium bromide." evidence="5">
    <original>YGE</original>
    <variation>AAA</variation>
    <location>
        <begin position="117"/>
        <end position="119"/>
    </location>
</feature>
<feature type="mutagenesis site" description="In mtSSB45-2; reduced mitochondrial DNA (mtDNA) copy number and reduced recovery of mtDNA depletion induced by ethidium bromide." evidence="5">
    <original>QQG</original>
    <variation>AAA</variation>
    <location>
        <begin position="123"/>
        <end position="125"/>
    </location>
</feature>
<gene>
    <name type="primary">mtSSB</name>
    <name type="synonym">lopo</name>
    <name type="ORF">CG4337</name>
</gene>
<comment type="function">
    <text evidence="3 4 5 6 7 8 9">Binds preferentially and cooperatively to pyrimidine rich single-stranded DNA (ss-DNA) (PubMed:21953457, PubMed:7673145, PubMed:8206370). Required to maintain the copy number of mitochondrial DNA (mtDNA) and plays crucial roles during mtDNA replication that stimulate activity of the gamma complex polymerase PolG1/tam at the replication fork (PubMed:11294889, PubMed:14754882, PubMed:21953457, PubMed:26446790, PubMed:28318978, PubMed:7673145). Promotes PolG1 activity largely by organizing the template DNA and eliminating secondary structures to favor ss-DNA conformations that facilitate PolG1 activity (PubMed:21953457, PubMed:26446790, PubMed:7673145).</text>
</comment>
<comment type="subunit">
    <text evidence="8">Homotetramer.</text>
</comment>
<comment type="subcellular location">
    <subcellularLocation>
        <location evidence="8">Mitochondrion</location>
    </subcellularLocation>
</comment>
<comment type="tissue specificity">
    <text evidence="2 3 9">Uniformly distributed in the early embryo. High levels detected in the anterior and posterior midgut primordia of stage 12 embryos. In larvae, high levels were detected in proliferating tissues including the CNS and digestive tract. In adults, highly expressed in the CNS, digestive tract and ovary.</text>
</comment>
<comment type="developmental stage">
    <text evidence="2 3 9">Expressed both maternally and zygotically. Levels are high during embryogenesis and in the larvae but decrease in the pupae before increasing again in the adult.</text>
</comment>
<comment type="mass spectrometry"/>
<comment type="disruption phenotype">
    <text evidence="7">RNAi-mediated knockdown in the testes results in a reduced number of paternal mitochondrial nucleoids at the nebenkern stage of spermatogenesis (PubMed:28318978). However, the clearance of nucleoids at the elongation stage of spermatogenesis is unaffected (PubMed:28318978).</text>
</comment>
<comment type="sequence caution" evidence="10">
    <conflict type="erroneous initiation">
        <sequence resource="EMBL-CDS" id="AAA20507"/>
    </conflict>
    <text>Truncated N-terminus.</text>
</comment>
<comment type="sequence caution" evidence="10">
    <conflict type="erroneous gene model prediction">
        <sequence resource="EMBL-CDS" id="AAF16936"/>
    </conflict>
</comment>
<dbReference type="EMBL" id="AF181084">
    <property type="protein sequence ID" value="AAF16936.1"/>
    <property type="status" value="ALT_SEQ"/>
    <property type="molecule type" value="Genomic_DNA"/>
</dbReference>
<dbReference type="EMBL" id="AE014297">
    <property type="protein sequence ID" value="AAF55287.2"/>
    <property type="molecule type" value="Genomic_DNA"/>
</dbReference>
<dbReference type="EMBL" id="BT016028">
    <property type="protein sequence ID" value="AAV36913.2"/>
    <property type="molecule type" value="mRNA"/>
</dbReference>
<dbReference type="EMBL" id="U00669">
    <property type="protein sequence ID" value="AAA20507.1"/>
    <property type="status" value="ALT_INIT"/>
    <property type="molecule type" value="mRNA"/>
</dbReference>
<dbReference type="RefSeq" id="NP_536744.2">
    <property type="nucleotide sequence ID" value="NM_080496.4"/>
</dbReference>
<dbReference type="SMR" id="P54622"/>
<dbReference type="BioGRID" id="67018">
    <property type="interactions" value="18"/>
</dbReference>
<dbReference type="DIP" id="DIP-22042N"/>
<dbReference type="FunCoup" id="P54622">
    <property type="interactions" value="1655"/>
</dbReference>
<dbReference type="IntAct" id="P54622">
    <property type="interactions" value="20"/>
</dbReference>
<dbReference type="MINT" id="P54622"/>
<dbReference type="STRING" id="7227.FBpp0082729"/>
<dbReference type="PaxDb" id="7227-FBpp0099503"/>
<dbReference type="DNASU" id="41968"/>
<dbReference type="EnsemblMetazoa" id="FBtr0083277">
    <property type="protein sequence ID" value="FBpp0082729"/>
    <property type="gene ID" value="FBgn0010438"/>
</dbReference>
<dbReference type="GeneID" id="41968"/>
<dbReference type="KEGG" id="dme:Dmel_CG4337"/>
<dbReference type="AGR" id="FB:FBgn0010438"/>
<dbReference type="CTD" id="41968"/>
<dbReference type="FlyBase" id="FBgn0010438">
    <property type="gene designation" value="mtSSB"/>
</dbReference>
<dbReference type="VEuPathDB" id="VectorBase:FBgn0010438"/>
<dbReference type="eggNOG" id="KOG1653">
    <property type="taxonomic scope" value="Eukaryota"/>
</dbReference>
<dbReference type="GeneTree" id="ENSGT00390000002796"/>
<dbReference type="HOGENOM" id="CLU_078758_2_1_1"/>
<dbReference type="InParanoid" id="P54622"/>
<dbReference type="OMA" id="IKSRQWQ"/>
<dbReference type="OrthoDB" id="1078367at2759"/>
<dbReference type="PhylomeDB" id="P54622"/>
<dbReference type="Reactome" id="R-DME-9837999">
    <property type="pathway name" value="Mitochondrial protein degradation"/>
</dbReference>
<dbReference type="Reactome" id="R-DME-9913635">
    <property type="pathway name" value="Strand-asynchronous mitochondrial DNA replication"/>
</dbReference>
<dbReference type="BioGRID-ORCS" id="41968">
    <property type="hits" value="1 hit in 1 CRISPR screen"/>
</dbReference>
<dbReference type="GenomeRNAi" id="41968"/>
<dbReference type="PRO" id="PR:P54622"/>
<dbReference type="Proteomes" id="UP000000803">
    <property type="component" value="Chromosome 3R"/>
</dbReference>
<dbReference type="Bgee" id="FBgn0010438">
    <property type="expression patterns" value="Expressed in secondary oocyte and 54 other cell types or tissues"/>
</dbReference>
<dbReference type="GO" id="GO:0000262">
    <property type="term" value="C:mitochondrial chromosome"/>
    <property type="evidence" value="ECO:0000314"/>
    <property type="project" value="FlyBase"/>
</dbReference>
<dbReference type="GO" id="GO:0042645">
    <property type="term" value="C:mitochondrial nucleoid"/>
    <property type="evidence" value="ECO:0000318"/>
    <property type="project" value="GO_Central"/>
</dbReference>
<dbReference type="GO" id="GO:0005739">
    <property type="term" value="C:mitochondrion"/>
    <property type="evidence" value="ECO:0000314"/>
    <property type="project" value="UniProtKB"/>
</dbReference>
<dbReference type="GO" id="GO:0008047">
    <property type="term" value="F:enzyme activator activity"/>
    <property type="evidence" value="ECO:0000318"/>
    <property type="project" value="GO_Central"/>
</dbReference>
<dbReference type="GO" id="GO:0003697">
    <property type="term" value="F:single-stranded DNA binding"/>
    <property type="evidence" value="ECO:0000314"/>
    <property type="project" value="UniProtKB"/>
</dbReference>
<dbReference type="GO" id="GO:0006260">
    <property type="term" value="P:DNA replication"/>
    <property type="evidence" value="ECO:0000318"/>
    <property type="project" value="GO_Central"/>
</dbReference>
<dbReference type="GO" id="GO:0090592">
    <property type="term" value="P:DNA synthesis involved in DNA replication"/>
    <property type="evidence" value="ECO:0000314"/>
    <property type="project" value="FlyBase"/>
</dbReference>
<dbReference type="GO" id="GO:0006261">
    <property type="term" value="P:DNA-templated DNA replication"/>
    <property type="evidence" value="ECO:0000314"/>
    <property type="project" value="FlyBase"/>
</dbReference>
<dbReference type="GO" id="GO:0006264">
    <property type="term" value="P:mitochondrial DNA replication"/>
    <property type="evidence" value="ECO:0000314"/>
    <property type="project" value="UniProtKB"/>
</dbReference>
<dbReference type="GO" id="GO:0000002">
    <property type="term" value="P:mitochondrial genome maintenance"/>
    <property type="evidence" value="ECO:0000314"/>
    <property type="project" value="UniProtKB"/>
</dbReference>
<dbReference type="GO" id="GO:1900264">
    <property type="term" value="P:positive regulation of DNA-directed DNA polymerase activity"/>
    <property type="evidence" value="ECO:0000315"/>
    <property type="project" value="UniProtKB"/>
</dbReference>
<dbReference type="GO" id="GO:0090297">
    <property type="term" value="P:positive regulation of mitochondrial DNA replication"/>
    <property type="evidence" value="ECO:0000315"/>
    <property type="project" value="UniProtKB"/>
</dbReference>
<dbReference type="CDD" id="cd04496">
    <property type="entry name" value="SSB_OBF"/>
    <property type="match status" value="1"/>
</dbReference>
<dbReference type="FunFam" id="2.40.50.140:FF:000269">
    <property type="entry name" value="Single-stranded DNA-binding protein"/>
    <property type="match status" value="1"/>
</dbReference>
<dbReference type="Gene3D" id="2.40.50.140">
    <property type="entry name" value="Nucleic acid-binding proteins"/>
    <property type="match status" value="1"/>
</dbReference>
<dbReference type="HAMAP" id="MF_00984">
    <property type="entry name" value="SSB"/>
    <property type="match status" value="1"/>
</dbReference>
<dbReference type="InterPro" id="IPR012340">
    <property type="entry name" value="NA-bd_OB-fold"/>
</dbReference>
<dbReference type="InterPro" id="IPR000424">
    <property type="entry name" value="Primosome_PriB/ssb"/>
</dbReference>
<dbReference type="InterPro" id="IPR011344">
    <property type="entry name" value="ssDNA-bd"/>
</dbReference>
<dbReference type="NCBIfam" id="TIGR00621">
    <property type="entry name" value="ssb"/>
    <property type="match status" value="1"/>
</dbReference>
<dbReference type="PANTHER" id="PTHR10302">
    <property type="entry name" value="SINGLE-STRANDED DNA-BINDING PROTEIN"/>
    <property type="match status" value="1"/>
</dbReference>
<dbReference type="PANTHER" id="PTHR10302:SF0">
    <property type="entry name" value="SINGLE-STRANDED DNA-BINDING PROTEIN, MITOCHONDRIAL"/>
    <property type="match status" value="1"/>
</dbReference>
<dbReference type="Pfam" id="PF00436">
    <property type="entry name" value="SSB"/>
    <property type="match status" value="1"/>
</dbReference>
<dbReference type="SUPFAM" id="SSF50249">
    <property type="entry name" value="Nucleic acid-binding proteins"/>
    <property type="match status" value="1"/>
</dbReference>
<dbReference type="PROSITE" id="PS50935">
    <property type="entry name" value="SSB"/>
    <property type="match status" value="1"/>
</dbReference>
<protein>
    <recommendedName>
        <fullName>Single-stranded DNA-binding protein, mitochondrial</fullName>
        <shortName>Dm mtSSB</shortName>
        <shortName>Mt-SSB</shortName>
        <shortName>MtSSB</shortName>
    </recommendedName>
    <alternativeName>
        <fullName>Protein low power</fullName>
    </alternativeName>
</protein>